<name>PG087_VAR67</name>
<comment type="function">
    <text evidence="1">Involved in postreplicative transcription elongation on intermediate and late genes.</text>
</comment>
<comment type="subunit">
    <text evidence="1">Interacts with H5 and A18. Might be part of a transcription complex composed at least of OPG087, OPG145, and OPG110.</text>
</comment>
<comment type="similarity">
    <text evidence="2">Belongs to the orthopoxvirus OPG087 family.</text>
</comment>
<proteinExistence type="inferred from homology"/>
<keyword id="KW-0244">Early protein</keyword>
<keyword id="KW-0251">Elongation factor</keyword>
<keyword id="KW-0648">Protein biosynthesis</keyword>
<keyword id="KW-1185">Reference proteome</keyword>
<protein>
    <recommendedName>
        <fullName>Late transcription elongation factor OPG087</fullName>
    </recommendedName>
    <alternativeName>
        <fullName>Late transcription elongation factor G2</fullName>
    </alternativeName>
    <alternativeName>
        <fullName>Protein G2</fullName>
    </alternativeName>
</protein>
<accession>P0DOP7</accession>
<accession>P32992</accession>
<organismHost>
    <name type="scientific">Homo sapiens</name>
    <name type="common">Human</name>
    <dbReference type="NCBI Taxonomy" id="9606"/>
</organismHost>
<sequence>MPFRDLILFNLSKFLLTEDKESLEIVSSLCRGFEISYDDLITYFPDRKYHKYIYKVFEHVDLSEELSMEFHDTTLRDLVYLKLYKYSKCIRPCYKLGDNLKGIVVIKDRNIYIREANDDLIEYLLKEYTPQIYTYSNEHVPIAGSKLILCGFSQVTFMAYTTSHITTNKKVDVLVSKKCIDKLVDPINYQILQNLFDKGSGTINKILRKIFYSVTGGQTP</sequence>
<feature type="chain" id="PRO_0000099526" description="Late transcription elongation factor OPG087">
    <location>
        <begin position="1"/>
        <end position="220"/>
    </location>
</feature>
<reference key="1">
    <citation type="journal article" date="1993" name="Virus Res.">
        <title>Analysis of the nucleotide sequence of a 43 kbp segment of the genome of variola virus India-1967 strain.</title>
        <authorList>
            <person name="Shchelkunov S.N."/>
            <person name="Blinov V.M."/>
            <person name="Resenchuk S.M."/>
            <person name="Totmenin A.V."/>
            <person name="Sandakhchiev L.S."/>
        </authorList>
    </citation>
    <scope>NUCLEOTIDE SEQUENCE [GENOMIC DNA]</scope>
</reference>
<reference key="2">
    <citation type="journal article" date="1993" name="Virus Res.">
        <title>Nucleotide sequence analysis of variola virus HindIII M, L, I genome fragments.</title>
        <authorList>
            <person name="Shchelkunov S.N."/>
            <person name="Blinov V.M."/>
            <person name="Totmenin A.V."/>
            <person name="Marennikova S.S."/>
            <person name="Kolykhalov A.A."/>
            <person name="Frolov I.V."/>
            <person name="Chizhikov V.E."/>
            <person name="Gytorov V.V."/>
            <person name="Gashikov P.V."/>
            <person name="Belanov E.F."/>
            <person name="Belavin P.A."/>
            <person name="Resenchuk S.M."/>
            <person name="Andzhaparidze O.G."/>
            <person name="Sandakhchiev L.S."/>
        </authorList>
    </citation>
    <scope>NUCLEOTIDE SEQUENCE [GENOMIC DNA]</scope>
</reference>
<reference key="3">
    <citation type="journal article" date="1993" name="FEBS Lett.">
        <title>Genes of variola and vaccinia viruses necessary to overcome the host protective mechanisms.</title>
        <authorList>
            <person name="Shchelkunov S.N."/>
            <person name="Blinov V.M."/>
            <person name="Sandakhchiev L.S."/>
        </authorList>
    </citation>
    <scope>NUCLEOTIDE SEQUENCE [LARGE SCALE GENOMIC DNA]</scope>
</reference>
<evidence type="ECO:0000250" key="1">
    <source>
        <dbReference type="UniProtKB" id="P68456"/>
    </source>
</evidence>
<evidence type="ECO:0000305" key="2"/>
<organism>
    <name type="scientific">Variola virus (isolate Human/India/Ind3/1967)</name>
    <name type="common">VARV</name>
    <name type="synonym">Smallpox virus</name>
    <dbReference type="NCBI Taxonomy" id="587200"/>
    <lineage>
        <taxon>Viruses</taxon>
        <taxon>Varidnaviria</taxon>
        <taxon>Bamfordvirae</taxon>
        <taxon>Nucleocytoviricota</taxon>
        <taxon>Pokkesviricetes</taxon>
        <taxon>Chitovirales</taxon>
        <taxon>Poxviridae</taxon>
        <taxon>Chordopoxvirinae</taxon>
        <taxon>Orthopoxvirus</taxon>
        <taxon>Variola virus</taxon>
    </lineage>
</organism>
<gene>
    <name type="primary">OPG087</name>
    <name type="ORF">G2R</name>
</gene>
<dbReference type="EMBL" id="X67119">
    <property type="protein sequence ID" value="CAA47565.1"/>
    <property type="molecule type" value="Genomic_DNA"/>
</dbReference>
<dbReference type="EMBL" id="X69198">
    <property type="protein sequence ID" value="CAA49006.1"/>
    <property type="molecule type" value="Genomic_DNA"/>
</dbReference>
<dbReference type="PIR" id="S33080">
    <property type="entry name" value="S33080"/>
</dbReference>
<dbReference type="KEGG" id="vg:1486431"/>
<dbReference type="Proteomes" id="UP000002060">
    <property type="component" value="Segment"/>
</dbReference>
<dbReference type="InterPro" id="IPR008446">
    <property type="entry name" value="Chordopox_G2"/>
</dbReference>
<dbReference type="Pfam" id="PF05796">
    <property type="entry name" value="Chordopox_G2"/>
    <property type="match status" value="1"/>
</dbReference>